<proteinExistence type="evidence at transcript level"/>
<sequence length="284" mass="30771">MAERGGESGAERGGDRGDFGRGFGGGRGGGRGRDRGPRGRGRRGGRASEETKWVPVTKLGRLVADNKITKLEQIYLHSLPVKEYQIIDHLVGPTLKDEVMKIMPVQKQTRAGQRTRFKAFVVVGDGNGHVGLGVKCSKEVATAIRGAIILAKLSVVPVRRGYWGNKIGKPHTVPCKVTGKCGSVTVRMVPAPRGSGIVAARVPKKVLQFAGIDDVFTSSRGSTKTLGNFVKATFDCLQKTYGFLTPEFWKETRFSRSPYQEHTDFLSTKAVSATKVITEGEDQA</sequence>
<dbReference type="EMBL" id="AB076984">
    <property type="protein sequence ID" value="BAB82426.1"/>
    <property type="molecule type" value="Genomic_DNA"/>
</dbReference>
<dbReference type="EMBL" id="AB078516">
    <property type="protein sequence ID" value="BAB84012.1"/>
    <property type="molecule type" value="Genomic_DNA"/>
</dbReference>
<dbReference type="EMBL" id="AB078516">
    <property type="protein sequence ID" value="BAB84016.1"/>
    <property type="molecule type" value="Genomic_DNA"/>
</dbReference>
<dbReference type="EMBL" id="AC027036">
    <property type="protein sequence ID" value="AAK62780.1"/>
    <property type="molecule type" value="Genomic_DNA"/>
</dbReference>
<dbReference type="EMBL" id="AC027036">
    <property type="protein sequence ID" value="AAK62784.1"/>
    <property type="molecule type" value="Genomic_DNA"/>
</dbReference>
<dbReference type="EMBL" id="CP002684">
    <property type="protein sequence ID" value="AEE33559.1"/>
    <property type="molecule type" value="Genomic_DNA"/>
</dbReference>
<dbReference type="EMBL" id="CP002684">
    <property type="protein sequence ID" value="AEE33567.1"/>
    <property type="molecule type" value="Genomic_DNA"/>
</dbReference>
<dbReference type="EMBL" id="CP002684">
    <property type="protein sequence ID" value="AEE33576.1"/>
    <property type="molecule type" value="Genomic_DNA"/>
</dbReference>
<dbReference type="EMBL" id="AY065030">
    <property type="protein sequence ID" value="AAL57668.1"/>
    <property type="molecule type" value="mRNA"/>
</dbReference>
<dbReference type="EMBL" id="AY120723">
    <property type="protein sequence ID" value="AAM53281.1"/>
    <property type="molecule type" value="mRNA"/>
</dbReference>
<dbReference type="EMBL" id="AY133659">
    <property type="protein sequence ID" value="AAM91489.1"/>
    <property type="molecule type" value="mRNA"/>
</dbReference>
<dbReference type="EMBL" id="AK220575">
    <property type="protein sequence ID" value="BAD94842.1"/>
    <property type="molecule type" value="mRNA"/>
</dbReference>
<dbReference type="EMBL" id="BT025727">
    <property type="protein sequence ID" value="ABF82630.1"/>
    <property type="molecule type" value="mRNA"/>
</dbReference>
<dbReference type="EMBL" id="AB008017">
    <property type="protein sequence ID" value="BAA88264.1"/>
    <property type="molecule type" value="mRNA"/>
</dbReference>
<dbReference type="PIR" id="T52466">
    <property type="entry name" value="T52466"/>
</dbReference>
<dbReference type="RefSeq" id="NP_564737.1">
    <property type="nucleotide sequence ID" value="NM_104632.4"/>
</dbReference>
<dbReference type="RefSeq" id="NP_564740.1">
    <property type="nucleotide sequence ID" value="NM_104640.6"/>
</dbReference>
<dbReference type="RefSeq" id="NP_683443.1">
    <property type="nucleotide sequence ID" value="NM_148602.4"/>
</dbReference>
<dbReference type="SMR" id="Q93VB8"/>
<dbReference type="BioGRID" id="27447">
    <property type="interactions" value="107"/>
</dbReference>
<dbReference type="BioGRID" id="27454">
    <property type="interactions" value="107"/>
</dbReference>
<dbReference type="BioGRID" id="27462">
    <property type="interactions" value="107"/>
</dbReference>
<dbReference type="FunCoup" id="Q93VB8">
    <property type="interactions" value="3324"/>
</dbReference>
<dbReference type="IntAct" id="Q93VB8">
    <property type="interactions" value="1"/>
</dbReference>
<dbReference type="STRING" id="3702.Q93VB8"/>
<dbReference type="iPTMnet" id="Q93VB8"/>
<dbReference type="PaxDb" id="3702-AT1G58684.1"/>
<dbReference type="EnsemblPlants" id="AT1G58684.1">
    <property type="protein sequence ID" value="AT1G58684.1"/>
    <property type="gene ID" value="AT1G58684"/>
</dbReference>
<dbReference type="EnsemblPlants" id="AT1G58983.1">
    <property type="protein sequence ID" value="AT1G58983.1"/>
    <property type="gene ID" value="AT1G58983"/>
</dbReference>
<dbReference type="EnsemblPlants" id="AT1G59359.1">
    <property type="protein sequence ID" value="AT1G59359.1"/>
    <property type="gene ID" value="AT1G59359"/>
</dbReference>
<dbReference type="GeneID" id="842222"/>
<dbReference type="GeneID" id="842229"/>
<dbReference type="GeneID" id="842237"/>
<dbReference type="Gramene" id="AT1G58684.1">
    <property type="protein sequence ID" value="AT1G58684.1"/>
    <property type="gene ID" value="AT1G58684"/>
</dbReference>
<dbReference type="Gramene" id="AT1G58983.1">
    <property type="protein sequence ID" value="AT1G58983.1"/>
    <property type="gene ID" value="AT1G58983"/>
</dbReference>
<dbReference type="Gramene" id="AT1G59359.1">
    <property type="protein sequence ID" value="AT1G59359.1"/>
    <property type="gene ID" value="AT1G59359"/>
</dbReference>
<dbReference type="KEGG" id="ath:AT1G58684"/>
<dbReference type="KEGG" id="ath:AT1G58983"/>
<dbReference type="KEGG" id="ath:AT1G59359"/>
<dbReference type="Araport" id="AT1G58684"/>
<dbReference type="Araport" id="AT1G58983"/>
<dbReference type="Araport" id="AT1G59359"/>
<dbReference type="TAIR" id="AT1G58684"/>
<dbReference type="TAIR" id="AT1G58983"/>
<dbReference type="TAIR" id="AT1G59359"/>
<dbReference type="eggNOG" id="KOG0877">
    <property type="taxonomic scope" value="Eukaryota"/>
</dbReference>
<dbReference type="HOGENOM" id="CLU_065898_0_2_1"/>
<dbReference type="InParanoid" id="Q93VB8"/>
<dbReference type="OMA" id="SDYNGHI"/>
<dbReference type="OrthoDB" id="1083467at2759"/>
<dbReference type="PhylomeDB" id="Q93VB8"/>
<dbReference type="PRO" id="PR:Q93VB8"/>
<dbReference type="Proteomes" id="UP000006548">
    <property type="component" value="Chromosome 1"/>
</dbReference>
<dbReference type="ExpressionAtlas" id="Q93VB8">
    <property type="expression patterns" value="baseline and differential"/>
</dbReference>
<dbReference type="GO" id="GO:0022627">
    <property type="term" value="C:cytosolic small ribosomal subunit"/>
    <property type="evidence" value="ECO:0007005"/>
    <property type="project" value="TAIR"/>
</dbReference>
<dbReference type="GO" id="GO:0005634">
    <property type="term" value="C:nucleus"/>
    <property type="evidence" value="ECO:0007005"/>
    <property type="project" value="TAIR"/>
</dbReference>
<dbReference type="GO" id="GO:0009505">
    <property type="term" value="C:plant-type cell wall"/>
    <property type="evidence" value="ECO:0007005"/>
    <property type="project" value="TAIR"/>
</dbReference>
<dbReference type="GO" id="GO:0009506">
    <property type="term" value="C:plasmodesma"/>
    <property type="evidence" value="ECO:0007005"/>
    <property type="project" value="TAIR"/>
</dbReference>
<dbReference type="GO" id="GO:0003729">
    <property type="term" value="F:mRNA binding"/>
    <property type="evidence" value="ECO:0000314"/>
    <property type="project" value="TAIR"/>
</dbReference>
<dbReference type="GO" id="GO:0003735">
    <property type="term" value="F:structural constituent of ribosome"/>
    <property type="evidence" value="ECO:0000314"/>
    <property type="project" value="CAFA"/>
</dbReference>
<dbReference type="GO" id="GO:0006412">
    <property type="term" value="P:translation"/>
    <property type="evidence" value="ECO:0007669"/>
    <property type="project" value="InterPro"/>
</dbReference>
<dbReference type="FunFam" id="3.30.160.20:FF:000002">
    <property type="entry name" value="40S ribosomal protein S2"/>
    <property type="match status" value="1"/>
</dbReference>
<dbReference type="FunFam" id="3.30.230.10:FF:000004">
    <property type="entry name" value="40S ribosomal protein S2"/>
    <property type="match status" value="1"/>
</dbReference>
<dbReference type="Gene3D" id="3.30.160.20">
    <property type="match status" value="1"/>
</dbReference>
<dbReference type="Gene3D" id="3.30.230.10">
    <property type="match status" value="1"/>
</dbReference>
<dbReference type="InterPro" id="IPR020568">
    <property type="entry name" value="Ribosomal_Su5_D2-typ_SF"/>
</dbReference>
<dbReference type="InterPro" id="IPR000851">
    <property type="entry name" value="Ribosomal_uS5"/>
</dbReference>
<dbReference type="InterPro" id="IPR005324">
    <property type="entry name" value="Ribosomal_uS5_C"/>
</dbReference>
<dbReference type="InterPro" id="IPR005711">
    <property type="entry name" value="Ribosomal_uS5_euk/arc"/>
</dbReference>
<dbReference type="InterPro" id="IPR013810">
    <property type="entry name" value="Ribosomal_uS5_N"/>
</dbReference>
<dbReference type="InterPro" id="IPR018192">
    <property type="entry name" value="Ribosomal_uS5_N_CS"/>
</dbReference>
<dbReference type="InterPro" id="IPR014721">
    <property type="entry name" value="Ribsml_uS5_D2-typ_fold_subgr"/>
</dbReference>
<dbReference type="NCBIfam" id="TIGR01020">
    <property type="entry name" value="uS5_euk_arch"/>
    <property type="match status" value="1"/>
</dbReference>
<dbReference type="PANTHER" id="PTHR13718">
    <property type="entry name" value="RIBOSOMAL S SUBUNIT"/>
    <property type="match status" value="1"/>
</dbReference>
<dbReference type="PANTHER" id="PTHR13718:SF115">
    <property type="entry name" value="SMALL RIBOSOMAL SUBUNIT PROTEIN US5W-RELATED"/>
    <property type="match status" value="1"/>
</dbReference>
<dbReference type="Pfam" id="PF00333">
    <property type="entry name" value="Ribosomal_S5"/>
    <property type="match status" value="1"/>
</dbReference>
<dbReference type="Pfam" id="PF03719">
    <property type="entry name" value="Ribosomal_S5_C"/>
    <property type="match status" value="1"/>
</dbReference>
<dbReference type="SUPFAM" id="SSF54768">
    <property type="entry name" value="dsRNA-binding domain-like"/>
    <property type="match status" value="1"/>
</dbReference>
<dbReference type="SUPFAM" id="SSF54211">
    <property type="entry name" value="Ribosomal protein S5 domain 2-like"/>
    <property type="match status" value="1"/>
</dbReference>
<dbReference type="PROSITE" id="PS00585">
    <property type="entry name" value="RIBOSOMAL_S5"/>
    <property type="match status" value="1"/>
</dbReference>
<dbReference type="PROSITE" id="PS50881">
    <property type="entry name" value="S5_DSRBD"/>
    <property type="match status" value="1"/>
</dbReference>
<comment type="similarity">
    <text evidence="4">Belongs to the universal ribosomal protein uS5 family.</text>
</comment>
<evidence type="ECO:0000255" key="1">
    <source>
        <dbReference type="PROSITE-ProRule" id="PRU00268"/>
    </source>
</evidence>
<evidence type="ECO:0000256" key="2">
    <source>
        <dbReference type="SAM" id="MobiDB-lite"/>
    </source>
</evidence>
<evidence type="ECO:0000303" key="3">
    <source>
    </source>
</evidence>
<evidence type="ECO:0000305" key="4"/>
<accession>Q93VB8</accession>
<accession>Q8L861</accession>
<accession>Q9SM06</accession>
<protein>
    <recommendedName>
        <fullName evidence="3">Small ribosomal subunit protein uS5y/uS5u/uS5v</fullName>
    </recommendedName>
    <alternativeName>
        <fullName>40S ribosomal protein S2-2</fullName>
    </alternativeName>
</protein>
<name>RS22_ARATH</name>
<keyword id="KW-1185">Reference proteome</keyword>
<keyword id="KW-0687">Ribonucleoprotein</keyword>
<keyword id="KW-0689">Ribosomal protein</keyword>
<gene>
    <name type="primary">RPS2B</name>
    <name type="synonym">RF12</name>
    <name type="synonym">US5Y</name>
    <name type="ordered locus">At1g59359</name>
    <name type="ORF">T4M14_3</name>
</gene>
<gene>
    <name type="primary">US5U</name>
    <name type="ordered locus">At1g58983</name>
    <name type="ORF">T4M14.1</name>
</gene>
<gene>
    <name type="primary">US5V</name>
    <name type="ordered locus">At1g58684</name>
    <name type="ORF">R18I.8</name>
</gene>
<organism>
    <name type="scientific">Arabidopsis thaliana</name>
    <name type="common">Mouse-ear cress</name>
    <dbReference type="NCBI Taxonomy" id="3702"/>
    <lineage>
        <taxon>Eukaryota</taxon>
        <taxon>Viridiplantae</taxon>
        <taxon>Streptophyta</taxon>
        <taxon>Embryophyta</taxon>
        <taxon>Tracheophyta</taxon>
        <taxon>Spermatophyta</taxon>
        <taxon>Magnoliopsida</taxon>
        <taxon>eudicotyledons</taxon>
        <taxon>Gunneridae</taxon>
        <taxon>Pentapetalae</taxon>
        <taxon>rosids</taxon>
        <taxon>malvids</taxon>
        <taxon>Brassicales</taxon>
        <taxon>Brassicaceae</taxon>
        <taxon>Camelineae</taxon>
        <taxon>Arabidopsis</taxon>
    </lineage>
</organism>
<reference key="1">
    <citation type="journal article" date="1999" name="Gene">
        <title>Isolation and analysis of cDNA within a 300 kb Arabidopsis thaliana genomic region located around the 100 map unit of chromosome 1.</title>
        <authorList>
            <person name="Kato A."/>
            <person name="Suzuki M."/>
            <person name="Kuwahara A."/>
            <person name="Ooe H."/>
            <person name="Higano-Inaba K."/>
            <person name="Komeda Y."/>
        </authorList>
    </citation>
    <scope>NUCLEOTIDE SEQUENCE [GENOMIC DNA]</scope>
    <scope>NUCLEOTIDE SEQUENCE [MRNA] OF 3-284</scope>
    <source>
        <strain>cv. Columbia</strain>
    </source>
</reference>
<reference key="2">
    <citation type="journal article" date="2000" name="Nature">
        <title>Sequence and analysis of chromosome 1 of the plant Arabidopsis thaliana.</title>
        <authorList>
            <person name="Theologis A."/>
            <person name="Ecker J.R."/>
            <person name="Palm C.J."/>
            <person name="Federspiel N.A."/>
            <person name="Kaul S."/>
            <person name="White O."/>
            <person name="Alonso J."/>
            <person name="Altafi H."/>
            <person name="Araujo R."/>
            <person name="Bowman C.L."/>
            <person name="Brooks S.Y."/>
            <person name="Buehler E."/>
            <person name="Chan A."/>
            <person name="Chao Q."/>
            <person name="Chen H."/>
            <person name="Cheuk R.F."/>
            <person name="Chin C.W."/>
            <person name="Chung M.K."/>
            <person name="Conn L."/>
            <person name="Conway A.B."/>
            <person name="Conway A.R."/>
            <person name="Creasy T.H."/>
            <person name="Dewar K."/>
            <person name="Dunn P."/>
            <person name="Etgu P."/>
            <person name="Feldblyum T.V."/>
            <person name="Feng J.-D."/>
            <person name="Fong B."/>
            <person name="Fujii C.Y."/>
            <person name="Gill J.E."/>
            <person name="Goldsmith A.D."/>
            <person name="Haas B."/>
            <person name="Hansen N.F."/>
            <person name="Hughes B."/>
            <person name="Huizar L."/>
            <person name="Hunter J.L."/>
            <person name="Jenkins J."/>
            <person name="Johnson-Hopson C."/>
            <person name="Khan S."/>
            <person name="Khaykin E."/>
            <person name="Kim C.J."/>
            <person name="Koo H.L."/>
            <person name="Kremenetskaia I."/>
            <person name="Kurtz D.B."/>
            <person name="Kwan A."/>
            <person name="Lam B."/>
            <person name="Langin-Hooper S."/>
            <person name="Lee A."/>
            <person name="Lee J.M."/>
            <person name="Lenz C.A."/>
            <person name="Li J.H."/>
            <person name="Li Y.-P."/>
            <person name="Lin X."/>
            <person name="Liu S.X."/>
            <person name="Liu Z.A."/>
            <person name="Luros J.S."/>
            <person name="Maiti R."/>
            <person name="Marziali A."/>
            <person name="Militscher J."/>
            <person name="Miranda M."/>
            <person name="Nguyen M."/>
            <person name="Nierman W.C."/>
            <person name="Osborne B.I."/>
            <person name="Pai G."/>
            <person name="Peterson J."/>
            <person name="Pham P.K."/>
            <person name="Rizzo M."/>
            <person name="Rooney T."/>
            <person name="Rowley D."/>
            <person name="Sakano H."/>
            <person name="Salzberg S.L."/>
            <person name="Schwartz J.R."/>
            <person name="Shinn P."/>
            <person name="Southwick A.M."/>
            <person name="Sun H."/>
            <person name="Tallon L.J."/>
            <person name="Tambunga G."/>
            <person name="Toriumi M.J."/>
            <person name="Town C.D."/>
            <person name="Utterback T."/>
            <person name="Van Aken S."/>
            <person name="Vaysberg M."/>
            <person name="Vysotskaia V.S."/>
            <person name="Walker M."/>
            <person name="Wu D."/>
            <person name="Yu G."/>
            <person name="Fraser C.M."/>
            <person name="Venter J.C."/>
            <person name="Davis R.W."/>
        </authorList>
    </citation>
    <scope>NUCLEOTIDE SEQUENCE [LARGE SCALE GENOMIC DNA]</scope>
    <source>
        <strain>cv. Columbia</strain>
    </source>
</reference>
<reference key="3">
    <citation type="journal article" date="2017" name="Plant J.">
        <title>Araport11: a complete reannotation of the Arabidopsis thaliana reference genome.</title>
        <authorList>
            <person name="Cheng C.Y."/>
            <person name="Krishnakumar V."/>
            <person name="Chan A.P."/>
            <person name="Thibaud-Nissen F."/>
            <person name="Schobel S."/>
            <person name="Town C.D."/>
        </authorList>
    </citation>
    <scope>GENOME REANNOTATION</scope>
    <source>
        <strain>cv. Columbia</strain>
    </source>
</reference>
<reference key="4">
    <citation type="journal article" date="2003" name="Science">
        <title>Empirical analysis of transcriptional activity in the Arabidopsis genome.</title>
        <authorList>
            <person name="Yamada K."/>
            <person name="Lim J."/>
            <person name="Dale J.M."/>
            <person name="Chen H."/>
            <person name="Shinn P."/>
            <person name="Palm C.J."/>
            <person name="Southwick A.M."/>
            <person name="Wu H.C."/>
            <person name="Kim C.J."/>
            <person name="Nguyen M."/>
            <person name="Pham P.K."/>
            <person name="Cheuk R.F."/>
            <person name="Karlin-Newmann G."/>
            <person name="Liu S.X."/>
            <person name="Lam B."/>
            <person name="Sakano H."/>
            <person name="Wu T."/>
            <person name="Yu G."/>
            <person name="Miranda M."/>
            <person name="Quach H.L."/>
            <person name="Tripp M."/>
            <person name="Chang C.H."/>
            <person name="Lee J.M."/>
            <person name="Toriumi M.J."/>
            <person name="Chan M.M."/>
            <person name="Tang C.C."/>
            <person name="Onodera C.S."/>
            <person name="Deng J.M."/>
            <person name="Akiyama K."/>
            <person name="Ansari Y."/>
            <person name="Arakawa T."/>
            <person name="Banh J."/>
            <person name="Banno F."/>
            <person name="Bowser L."/>
            <person name="Brooks S.Y."/>
            <person name="Carninci P."/>
            <person name="Chao Q."/>
            <person name="Choy N."/>
            <person name="Enju A."/>
            <person name="Goldsmith A.D."/>
            <person name="Gurjal M."/>
            <person name="Hansen N.F."/>
            <person name="Hayashizaki Y."/>
            <person name="Johnson-Hopson C."/>
            <person name="Hsuan V.W."/>
            <person name="Iida K."/>
            <person name="Karnes M."/>
            <person name="Khan S."/>
            <person name="Koesema E."/>
            <person name="Ishida J."/>
            <person name="Jiang P.X."/>
            <person name="Jones T."/>
            <person name="Kawai J."/>
            <person name="Kamiya A."/>
            <person name="Meyers C."/>
            <person name="Nakajima M."/>
            <person name="Narusaka M."/>
            <person name="Seki M."/>
            <person name="Sakurai T."/>
            <person name="Satou M."/>
            <person name="Tamse R."/>
            <person name="Vaysberg M."/>
            <person name="Wallender E.K."/>
            <person name="Wong C."/>
            <person name="Yamamura Y."/>
            <person name="Yuan S."/>
            <person name="Shinozaki K."/>
            <person name="Davis R.W."/>
            <person name="Theologis A."/>
            <person name="Ecker J.R."/>
        </authorList>
    </citation>
    <scope>NUCLEOTIDE SEQUENCE [LARGE SCALE MRNA]</scope>
    <source>
        <strain>cv. Columbia</strain>
    </source>
</reference>
<reference key="5">
    <citation type="submission" date="2005-03" db="EMBL/GenBank/DDBJ databases">
        <title>Large-scale analysis of RIKEN Arabidopsis full-length (RAFL) cDNAs.</title>
        <authorList>
            <person name="Totoki Y."/>
            <person name="Seki M."/>
            <person name="Ishida J."/>
            <person name="Nakajima M."/>
            <person name="Enju A."/>
            <person name="Kamiya A."/>
            <person name="Narusaka M."/>
            <person name="Shin-i T."/>
            <person name="Nakagawa M."/>
            <person name="Sakamoto N."/>
            <person name="Oishi K."/>
            <person name="Kohara Y."/>
            <person name="Kobayashi M."/>
            <person name="Toyoda A."/>
            <person name="Sakaki Y."/>
            <person name="Sakurai T."/>
            <person name="Iida K."/>
            <person name="Akiyama K."/>
            <person name="Satou M."/>
            <person name="Toyoda T."/>
            <person name="Konagaya A."/>
            <person name="Carninci P."/>
            <person name="Kawai J."/>
            <person name="Hayashizaki Y."/>
            <person name="Shinozaki K."/>
        </authorList>
    </citation>
    <scope>NUCLEOTIDE SEQUENCE [LARGE SCALE MRNA]</scope>
    <source>
        <strain>cv. Columbia</strain>
    </source>
</reference>
<reference key="6">
    <citation type="submission" date="2006-06" db="EMBL/GenBank/DDBJ databases">
        <title>Arabidopsis ORF clone.</title>
        <authorList>
            <person name="Quinitio C."/>
            <person name="Chen H."/>
            <person name="Kim C.J."/>
            <person name="Shinn P."/>
            <person name="Ecker J.R."/>
        </authorList>
    </citation>
    <scope>NUCLEOTIDE SEQUENCE [LARGE SCALE MRNA]</scope>
    <source>
        <strain>cv. Columbia</strain>
    </source>
</reference>
<reference key="7">
    <citation type="submission" date="2002-03" db="EMBL/GenBank/DDBJ databases">
        <title>Full-length cDNA from Arabidopsis thaliana.</title>
        <authorList>
            <person name="Brover V.V."/>
            <person name="Troukhan M.E."/>
            <person name="Alexandrov N.A."/>
            <person name="Lu Y.-P."/>
            <person name="Flavell R.B."/>
            <person name="Feldmann K.A."/>
        </authorList>
    </citation>
    <scope>NUCLEOTIDE SEQUENCE [LARGE SCALE MRNA]</scope>
</reference>
<reference key="8">
    <citation type="journal article" date="2001" name="Plant Physiol.">
        <title>The organization of cytoplasmic ribosomal protein genes in the Arabidopsis genome.</title>
        <authorList>
            <person name="Barakat A."/>
            <person name="Szick-Miranda K."/>
            <person name="Chang I.-F."/>
            <person name="Guyot R."/>
            <person name="Blanc G."/>
            <person name="Cooke R."/>
            <person name="Delseny M."/>
            <person name="Bailey-Serres J."/>
        </authorList>
    </citation>
    <scope>GENE FAMILY ORGANIZATION</scope>
    <scope>NOMENCLATURE</scope>
</reference>
<reference key="9">
    <citation type="journal article" date="2023" name="Plant Cell">
        <title>An updated nomenclature for plant ribosomal protein genes.</title>
        <authorList>
            <person name="Scarpin M.R."/>
            <person name="Busche M."/>
            <person name="Martinez R.E."/>
            <person name="Harper L.C."/>
            <person name="Reiser L."/>
            <person name="Szakonyi D."/>
            <person name="Merchante C."/>
            <person name="Lan T."/>
            <person name="Xiong W."/>
            <person name="Mo B."/>
            <person name="Tang G."/>
            <person name="Chen X."/>
            <person name="Bailey-Serres J."/>
            <person name="Browning K.S."/>
            <person name="Brunkard J.O."/>
        </authorList>
    </citation>
    <scope>NOMENCLATURE</scope>
</reference>
<feature type="chain" id="PRO_0000250175" description="Small ribosomal subunit protein uS5y/uS5u/uS5v">
    <location>
        <begin position="1"/>
        <end position="284"/>
    </location>
</feature>
<feature type="domain" description="S5 DRBM" evidence="1">
    <location>
        <begin position="95"/>
        <end position="158"/>
    </location>
</feature>
<feature type="region of interest" description="Disordered" evidence="2">
    <location>
        <begin position="1"/>
        <end position="51"/>
    </location>
</feature>
<feature type="compositionally biased region" description="Basic and acidic residues" evidence="2">
    <location>
        <begin position="1"/>
        <end position="19"/>
    </location>
</feature>
<feature type="compositionally biased region" description="Gly residues" evidence="2">
    <location>
        <begin position="20"/>
        <end position="29"/>
    </location>
</feature>
<feature type="sequence conflict" description="In Ref. 7; AAM53281." evidence="4" ref="7">
    <original>N</original>
    <variation>K</variation>
    <location>
        <position position="228"/>
    </location>
</feature>